<protein>
    <recommendedName>
        <fullName evidence="2">Large ribosomal subunit protein P2</fullName>
    </recommendedName>
    <alternativeName>
        <fullName>60S acidic ribosomal protein P2</fullName>
    </alternativeName>
    <alternativeName>
        <fullName>Acidic ribosomal P2 beta protein</fullName>
        <shortName>P2B-protein</shortName>
    </alternativeName>
</protein>
<dbReference type="EMBL" id="AF045020">
    <property type="protein sequence ID" value="AAC02540.1"/>
    <property type="molecule type" value="mRNA"/>
</dbReference>
<dbReference type="EMBL" id="FR799005">
    <property type="protein sequence ID" value="CAM40525.1"/>
    <property type="molecule type" value="Genomic_DNA"/>
</dbReference>
<dbReference type="RefSeq" id="XP_001566999.1">
    <property type="nucleotide sequence ID" value="XM_001566949.1"/>
</dbReference>
<dbReference type="PDB" id="1S4H">
    <property type="method" value="NMR"/>
    <property type="chains" value="A=93-105"/>
</dbReference>
<dbReference type="PDBsum" id="1S4H"/>
<dbReference type="SMR" id="O44010"/>
<dbReference type="FunCoup" id="O44010">
    <property type="interactions" value="320"/>
</dbReference>
<dbReference type="STRING" id="5660.O44010"/>
<dbReference type="GeneID" id="5417901"/>
<dbReference type="KEGG" id="lbz:LBRM_30_3760"/>
<dbReference type="VEuPathDB" id="TriTrypDB:LbrM.30.3760"/>
<dbReference type="InParanoid" id="O44010"/>
<dbReference type="OMA" id="DIMAQGI"/>
<dbReference type="EvolutionaryTrace" id="O44010"/>
<dbReference type="Proteomes" id="UP000007258">
    <property type="component" value="Chromosome 30"/>
</dbReference>
<dbReference type="GO" id="GO:0022625">
    <property type="term" value="C:cytosolic large ribosomal subunit"/>
    <property type="evidence" value="ECO:0007669"/>
    <property type="project" value="InterPro"/>
</dbReference>
<dbReference type="GO" id="GO:0003735">
    <property type="term" value="F:structural constituent of ribosome"/>
    <property type="evidence" value="ECO:0007669"/>
    <property type="project" value="InterPro"/>
</dbReference>
<dbReference type="GO" id="GO:0002182">
    <property type="term" value="P:cytoplasmic translational elongation"/>
    <property type="evidence" value="ECO:0007669"/>
    <property type="project" value="InterPro"/>
</dbReference>
<dbReference type="CDD" id="cd05833">
    <property type="entry name" value="Ribosomal_P2"/>
    <property type="match status" value="1"/>
</dbReference>
<dbReference type="FunFam" id="1.10.10.1410:FF:000002">
    <property type="entry name" value="60S acidic ribosomal protein P2"/>
    <property type="match status" value="1"/>
</dbReference>
<dbReference type="Gene3D" id="1.10.10.1410">
    <property type="match status" value="1"/>
</dbReference>
<dbReference type="HAMAP" id="MF_01478">
    <property type="entry name" value="Ribosomal_L12_arch"/>
    <property type="match status" value="1"/>
</dbReference>
<dbReference type="InterPro" id="IPR038716">
    <property type="entry name" value="P1/P2_N_sf"/>
</dbReference>
<dbReference type="InterPro" id="IPR027534">
    <property type="entry name" value="Ribosomal_P1/P2"/>
</dbReference>
<dbReference type="InterPro" id="IPR001859">
    <property type="entry name" value="Ribosomal_P1/P2_euk"/>
</dbReference>
<dbReference type="InterPro" id="IPR044076">
    <property type="entry name" value="Ribosomal_P2"/>
</dbReference>
<dbReference type="PANTHER" id="PTHR21141">
    <property type="entry name" value="60S ACIDIC RIBOSOMAL PROTEIN FAMILY MEMBER"/>
    <property type="match status" value="1"/>
</dbReference>
<dbReference type="PANTHER" id="PTHR21141:SF58">
    <property type="entry name" value="ACIDIC RIBOSOMAL PROTEIN P2, PUTATIVE-RELATED"/>
    <property type="match status" value="1"/>
</dbReference>
<dbReference type="Pfam" id="PF00428">
    <property type="entry name" value="Ribosomal_60s"/>
    <property type="match status" value="1"/>
</dbReference>
<dbReference type="PRINTS" id="PR00456">
    <property type="entry name" value="RIBOSOMALP2"/>
</dbReference>
<sequence>MQYLAAYALVALSGKTPCKADVQAVLKAAGVAIELSRVDALFQELEGKSFDELMTEGRSKLVGSGSAAPAAAASTAGAAVAAAADAKKEASEEEADDDMGFGLFD</sequence>
<comment type="function">
    <text evidence="1">Plays an important role in the elongation step of protein synthesis.</text>
</comment>
<comment type="subunit">
    <text evidence="1">P1 and P2 exist as dimers at the large ribosomal subunit.</text>
</comment>
<comment type="PTM">
    <text evidence="1">Phosphorylated.</text>
</comment>
<comment type="similarity">
    <text evidence="2">Belongs to the eukaryotic ribosomal protein P1/P2 family.</text>
</comment>
<keyword id="KW-0002">3D-structure</keyword>
<keyword id="KW-0597">Phosphoprotein</keyword>
<keyword id="KW-1185">Reference proteome</keyword>
<keyword id="KW-0687">Ribonucleoprotein</keyword>
<keyword id="KW-0689">Ribosomal protein</keyword>
<accession>O44010</accession>
<accession>A4HIV9</accession>
<evidence type="ECO:0000250" key="1"/>
<evidence type="ECO:0000305" key="2"/>
<evidence type="ECO:0007829" key="3">
    <source>
        <dbReference type="PDB" id="1S4H"/>
    </source>
</evidence>
<proteinExistence type="evidence at protein level"/>
<gene>
    <name type="primary">LIP2</name>
    <name type="ORF">LbrM30_V2.3760</name>
    <name type="ORF">LbrM_30_3760</name>
</gene>
<feature type="chain" id="PRO_0000157655" description="Large ribosomal subunit protein P2">
    <location>
        <begin position="1"/>
        <end position="105"/>
    </location>
</feature>
<feature type="turn" evidence="3">
    <location>
        <begin position="102"/>
        <end position="104"/>
    </location>
</feature>
<reference key="1">
    <citation type="submission" date="1998-01" db="EMBL/GenBank/DDBJ databases">
        <title>Characterization of the ribosomal P2 beta protein from Leishmania (V.) braziliensis.</title>
        <authorList>
            <person name="Padilla C."/>
            <person name="Carrillo C."/>
            <person name="Montoya Y."/>
        </authorList>
    </citation>
    <scope>NUCLEOTIDE SEQUENCE [MRNA]</scope>
    <source>
        <strain>MHOM/PE/85/LH166</strain>
    </source>
</reference>
<reference key="2">
    <citation type="journal article" date="2007" name="Nat. Genet.">
        <title>Comparative genomic analysis of three Leishmania species that cause diverse human disease.</title>
        <authorList>
            <person name="Peacock C.S."/>
            <person name="Seeger K."/>
            <person name="Harris D."/>
            <person name="Murphy L."/>
            <person name="Ruiz J.C."/>
            <person name="Quail M.A."/>
            <person name="Peters N."/>
            <person name="Adlem E."/>
            <person name="Tivey A."/>
            <person name="Aslett M."/>
            <person name="Kerhornou A."/>
            <person name="Ivens A."/>
            <person name="Fraser A."/>
            <person name="Rajandream M.-A."/>
            <person name="Carver T."/>
            <person name="Norbertczak H."/>
            <person name="Chillingworth T."/>
            <person name="Hance Z."/>
            <person name="Jagels K."/>
            <person name="Moule S."/>
            <person name="Ormond D."/>
            <person name="Rutter S."/>
            <person name="Sqaures R."/>
            <person name="Whitehead S."/>
            <person name="Rabbinowitsch E."/>
            <person name="Arrowsmith C."/>
            <person name="White B."/>
            <person name="Thurston S."/>
            <person name="Bringaud F."/>
            <person name="Baldauf S.L."/>
            <person name="Faulconbridge A."/>
            <person name="Jeffares D."/>
            <person name="Depledge D.P."/>
            <person name="Oyola S.O."/>
            <person name="Hilley J.D."/>
            <person name="Brito L.O."/>
            <person name="Tosi L.R.O."/>
            <person name="Barrell B."/>
            <person name="Cruz A.K."/>
            <person name="Mottram J.C."/>
            <person name="Smith D.F."/>
            <person name="Berriman M."/>
        </authorList>
    </citation>
    <scope>NUCLEOTIDE SEQUENCE [LARGE SCALE GENOMIC DNA]</scope>
    <source>
        <strain>MHOM/BR/75/M2904</strain>
    </source>
</reference>
<reference key="3">
    <citation type="journal article" date="2004" name="FEBS Lett.">
        <title>Correlation between conformation and antibody binding: NMR structure of cross-reactive peptides from T. cruzi, human and L. braziliensis.</title>
        <authorList>
            <person name="Soares M.R."/>
            <person name="Bisch P.M."/>
            <person name="Campos de Carvalho A.C."/>
            <person name="Valente A.P."/>
            <person name="Almeida F.C."/>
        </authorList>
    </citation>
    <scope>STRUCTURE BY NMR OF 93-105</scope>
</reference>
<name>RLA2_LEIBR</name>
<organism>
    <name type="scientific">Leishmania braziliensis</name>
    <dbReference type="NCBI Taxonomy" id="5660"/>
    <lineage>
        <taxon>Eukaryota</taxon>
        <taxon>Discoba</taxon>
        <taxon>Euglenozoa</taxon>
        <taxon>Kinetoplastea</taxon>
        <taxon>Metakinetoplastina</taxon>
        <taxon>Trypanosomatida</taxon>
        <taxon>Trypanosomatidae</taxon>
        <taxon>Leishmaniinae</taxon>
        <taxon>Leishmania</taxon>
        <taxon>Leishmania braziliensis species complex</taxon>
    </lineage>
</organism>